<sequence length="416" mass="45259">MIHPDPTLFGHDPWWLILAKAVGVFVFLVLTVLAAILIERKVLGRMQMRFGPNRVGPKGLLQSLADGIKLALKEGITPAGVDKPVYLLAPVISVIPAFLAFAVIPMGGEVSVFGHRTALQLTDLAVAVLYILAVTSVGVYGIVLAGWASGSTYPLLGGLRSSAQVVSYEIAMALSFATVFLYAGTMSTSGIVAAQTSTWYVFLLLPSFLVYVTSMVGETNRAPFDLPEAEGELVGGFHTEYSSLKFAMFMLAEYVNMTTVSALATTMFLGGWHAPWPISLWEGANSGWWPLLWFTAKVWVFLFVYIWLRGTLPRLRYDQFMAIGWKMLIPVSLAWIMIVATAHSLRTTGHGGWASGLLIAGTVLTFGLAVILWRTMRFRADRTVPARTAADVFPIPPIPGRAGTARTPESRETTDA</sequence>
<gene>
    <name evidence="1" type="primary">nuoH</name>
    <name type="ordered locus">Mmcs_1573</name>
</gene>
<dbReference type="EC" id="7.1.1.-" evidence="1"/>
<dbReference type="EMBL" id="CP000384">
    <property type="protein sequence ID" value="ABG07684.1"/>
    <property type="molecule type" value="Genomic_DNA"/>
</dbReference>
<dbReference type="SMR" id="Q1BBQ0"/>
<dbReference type="KEGG" id="mmc:Mmcs_1573"/>
<dbReference type="HOGENOM" id="CLU_015134_0_0_11"/>
<dbReference type="BioCyc" id="MSP164756:G1G6O-1610-MONOMER"/>
<dbReference type="GO" id="GO:0005886">
    <property type="term" value="C:plasma membrane"/>
    <property type="evidence" value="ECO:0007669"/>
    <property type="project" value="UniProtKB-SubCell"/>
</dbReference>
<dbReference type="GO" id="GO:0003954">
    <property type="term" value="F:NADH dehydrogenase activity"/>
    <property type="evidence" value="ECO:0007669"/>
    <property type="project" value="TreeGrafter"/>
</dbReference>
<dbReference type="GO" id="GO:0016655">
    <property type="term" value="F:oxidoreductase activity, acting on NAD(P)H, quinone or similar compound as acceptor"/>
    <property type="evidence" value="ECO:0007669"/>
    <property type="project" value="UniProtKB-UniRule"/>
</dbReference>
<dbReference type="GO" id="GO:0048038">
    <property type="term" value="F:quinone binding"/>
    <property type="evidence" value="ECO:0007669"/>
    <property type="project" value="UniProtKB-KW"/>
</dbReference>
<dbReference type="GO" id="GO:0009060">
    <property type="term" value="P:aerobic respiration"/>
    <property type="evidence" value="ECO:0007669"/>
    <property type="project" value="TreeGrafter"/>
</dbReference>
<dbReference type="HAMAP" id="MF_01350">
    <property type="entry name" value="NDH1_NuoH"/>
    <property type="match status" value="1"/>
</dbReference>
<dbReference type="InterPro" id="IPR001694">
    <property type="entry name" value="NADH_UbQ_OxRdtase_su1/FPO"/>
</dbReference>
<dbReference type="InterPro" id="IPR018086">
    <property type="entry name" value="NADH_UbQ_OxRdtase_su1_CS"/>
</dbReference>
<dbReference type="NCBIfam" id="NF004741">
    <property type="entry name" value="PRK06076.1-2"/>
    <property type="match status" value="1"/>
</dbReference>
<dbReference type="NCBIfam" id="NF004743">
    <property type="entry name" value="PRK06076.1-4"/>
    <property type="match status" value="1"/>
</dbReference>
<dbReference type="PANTHER" id="PTHR11432">
    <property type="entry name" value="NADH DEHYDROGENASE SUBUNIT 1"/>
    <property type="match status" value="1"/>
</dbReference>
<dbReference type="PANTHER" id="PTHR11432:SF3">
    <property type="entry name" value="NADH-UBIQUINONE OXIDOREDUCTASE CHAIN 1"/>
    <property type="match status" value="1"/>
</dbReference>
<dbReference type="Pfam" id="PF00146">
    <property type="entry name" value="NADHdh"/>
    <property type="match status" value="1"/>
</dbReference>
<dbReference type="PROSITE" id="PS00667">
    <property type="entry name" value="COMPLEX1_ND1_1"/>
    <property type="match status" value="1"/>
</dbReference>
<dbReference type="PROSITE" id="PS00668">
    <property type="entry name" value="COMPLEX1_ND1_2"/>
    <property type="match status" value="1"/>
</dbReference>
<keyword id="KW-1003">Cell membrane</keyword>
<keyword id="KW-0472">Membrane</keyword>
<keyword id="KW-0520">NAD</keyword>
<keyword id="KW-0874">Quinone</keyword>
<keyword id="KW-1278">Translocase</keyword>
<keyword id="KW-0812">Transmembrane</keyword>
<keyword id="KW-1133">Transmembrane helix</keyword>
<comment type="function">
    <text evidence="1">NDH-1 shuttles electrons from NADH, via FMN and iron-sulfur (Fe-S) centers, to quinones in the respiratory chain. The immediate electron acceptor for the enzyme in this species is believed to be menaquinone. Couples the redox reaction to proton translocation (for every two electrons transferred, four hydrogen ions are translocated across the cytoplasmic membrane), and thus conserves the redox energy in a proton gradient. This subunit may bind ubiquinone (By similarity).</text>
</comment>
<comment type="catalytic activity">
    <reaction evidence="1">
        <text>a quinone + NADH + 5 H(+)(in) = a quinol + NAD(+) + 4 H(+)(out)</text>
        <dbReference type="Rhea" id="RHEA:57888"/>
        <dbReference type="ChEBI" id="CHEBI:15378"/>
        <dbReference type="ChEBI" id="CHEBI:24646"/>
        <dbReference type="ChEBI" id="CHEBI:57540"/>
        <dbReference type="ChEBI" id="CHEBI:57945"/>
        <dbReference type="ChEBI" id="CHEBI:132124"/>
    </reaction>
</comment>
<comment type="subunit">
    <text evidence="1">NDH-1 is composed of 14 different subunits. Subunits NuoA, H, J, K, L, M, N constitute the membrane sector of the complex.</text>
</comment>
<comment type="subcellular location">
    <subcellularLocation>
        <location evidence="1">Cell membrane</location>
        <topology evidence="1">Multi-pass membrane protein</topology>
    </subcellularLocation>
</comment>
<comment type="similarity">
    <text evidence="1">Belongs to the complex I subunit 1 family.</text>
</comment>
<proteinExistence type="inferred from homology"/>
<organism>
    <name type="scientific">Mycobacterium sp. (strain MCS)</name>
    <dbReference type="NCBI Taxonomy" id="164756"/>
    <lineage>
        <taxon>Bacteria</taxon>
        <taxon>Bacillati</taxon>
        <taxon>Actinomycetota</taxon>
        <taxon>Actinomycetes</taxon>
        <taxon>Mycobacteriales</taxon>
        <taxon>Mycobacteriaceae</taxon>
        <taxon>Mycobacterium</taxon>
    </lineage>
</organism>
<name>NUOH_MYCSS</name>
<protein>
    <recommendedName>
        <fullName evidence="1">NADH-quinone oxidoreductase subunit H</fullName>
        <ecNumber evidence="1">7.1.1.-</ecNumber>
    </recommendedName>
    <alternativeName>
        <fullName evidence="1">NADH dehydrogenase I subunit H</fullName>
    </alternativeName>
    <alternativeName>
        <fullName evidence="1">NDH-1 subunit H</fullName>
    </alternativeName>
</protein>
<reference key="1">
    <citation type="submission" date="2006-06" db="EMBL/GenBank/DDBJ databases">
        <title>Complete sequence of chromosome of Mycobacterium sp. MCS.</title>
        <authorList>
            <consortium name="US DOE Joint Genome Institute"/>
            <person name="Copeland A."/>
            <person name="Lucas S."/>
            <person name="Lapidus A."/>
            <person name="Barry K."/>
            <person name="Detter J.C."/>
            <person name="Glavina del Rio T."/>
            <person name="Hammon N."/>
            <person name="Israni S."/>
            <person name="Dalin E."/>
            <person name="Tice H."/>
            <person name="Pitluck S."/>
            <person name="Martinez M."/>
            <person name="Schmutz J."/>
            <person name="Larimer F."/>
            <person name="Land M."/>
            <person name="Hauser L."/>
            <person name="Kyrpides N."/>
            <person name="Kim E."/>
            <person name="Miller C.D."/>
            <person name="Hughes J.E."/>
            <person name="Anderson A.J."/>
            <person name="Sims R.C."/>
            <person name="Richardson P."/>
        </authorList>
    </citation>
    <scope>NUCLEOTIDE SEQUENCE [LARGE SCALE GENOMIC DNA]</scope>
    <source>
        <strain>MCS</strain>
    </source>
</reference>
<accession>Q1BBQ0</accession>
<feature type="chain" id="PRO_0000299943" description="NADH-quinone oxidoreductase subunit H">
    <location>
        <begin position="1"/>
        <end position="416"/>
    </location>
</feature>
<feature type="transmembrane region" description="Helical" evidence="1">
    <location>
        <begin position="16"/>
        <end position="36"/>
    </location>
</feature>
<feature type="transmembrane region" description="Helical" evidence="1">
    <location>
        <begin position="84"/>
        <end position="104"/>
    </location>
</feature>
<feature type="transmembrane region" description="Helical" evidence="1">
    <location>
        <begin position="124"/>
        <end position="144"/>
    </location>
</feature>
<feature type="transmembrane region" description="Helical" evidence="1">
    <location>
        <begin position="165"/>
        <end position="185"/>
    </location>
</feature>
<feature type="transmembrane region" description="Helical" evidence="1">
    <location>
        <begin position="197"/>
        <end position="217"/>
    </location>
</feature>
<feature type="transmembrane region" description="Helical" evidence="1">
    <location>
        <begin position="260"/>
        <end position="280"/>
    </location>
</feature>
<feature type="transmembrane region" description="Helical" evidence="1">
    <location>
        <begin position="288"/>
        <end position="308"/>
    </location>
</feature>
<feature type="transmembrane region" description="Helical" evidence="1">
    <location>
        <begin position="320"/>
        <end position="340"/>
    </location>
</feature>
<feature type="transmembrane region" description="Helical" evidence="1">
    <location>
        <begin position="353"/>
        <end position="373"/>
    </location>
</feature>
<evidence type="ECO:0000255" key="1">
    <source>
        <dbReference type="HAMAP-Rule" id="MF_01350"/>
    </source>
</evidence>